<gene>
    <name evidence="14" type="primary">Ddhd2</name>
    <name type="synonym">Kiaa0725</name>
    <name type="synonym">Samwd1</name>
</gene>
<sequence>MSSGESHQEQLSQSDPSPSPNSCSSFELIDMDASSSYEPVSPHWFYCKVLDSKELWIPFNSEDSQQLEDAYGSGKDCNERIVPTDGGRYDVHLGERMRYAVYWDELPSEVRRCTWFYKGDKDNKYVPYSESFSQVLEDTYMLAVTLDEWKKKIESPNREIIVLHNPKLMVHYQPIAGSDEWGSTSTEQGRPRSVKRGVENIPVDIHCGEPLQIDHLVFVVHGIGPACDLRFRSIVQCVNDFRSVSLNLLQTHFKKAQENEQIGRVEFLPVNWHSPLHSTGVDIDLQRITLPSINRLRHFTNDTILDVFFYNSPTYCQTIVDTVASEMNRIYTLFLQRNPDFKGGVSIAGHSLGSLILFDILTNQKNSIGDIDSEKGSLSSAEDRGDASTLEEDLKKLQLSEFVTVFEKEKVDREALALCTDRDLQEMGIPLGPRKKILNHFSARKNSVSINRPAMSASEVNISKENGDYLDVGIGQVSVKYPRLNYKPEIFFAFGSPIGMFLTVRGLRRIDPNYKFPTCKGFFNIYHPFDPVAYRIEPMVAPGIEFEPMLIPHHKGRKRMHLELREGLTRMSMDLKNNLLGSLRMAWKSFTRGPYPALQASETAEETEAEPESSSEKSNEANTEEPPVEVKEEAPISVGMLNGGQRIDYVLQEKPIESFNEYLFALQSHLCYWESEDTVLLVLKEIYQTQGVFLDQPLQ</sequence>
<reference key="1">
    <citation type="journal article" date="2004" name="DNA Res.">
        <title>Prediction of the coding sequences of mouse homologues of KIAA gene: IV. The complete nucleotide sequences of 500 mouse KIAA-homologous cDNAs identified by screening of terminal sequences of cDNA clones randomly sampled from size-fractionated libraries.</title>
        <authorList>
            <person name="Okazaki N."/>
            <person name="Kikuno R."/>
            <person name="Ohara R."/>
            <person name="Inamoto S."/>
            <person name="Koseki H."/>
            <person name="Hiraoka S."/>
            <person name="Saga Y."/>
            <person name="Seino S."/>
            <person name="Nishimura M."/>
            <person name="Kaisho T."/>
            <person name="Hoshino K."/>
            <person name="Kitamura H."/>
            <person name="Nagase T."/>
            <person name="Ohara O."/>
            <person name="Koga H."/>
        </authorList>
    </citation>
    <scope>NUCLEOTIDE SEQUENCE [LARGE SCALE MRNA] (ISOFORM 3)</scope>
    <source>
        <tissue>Fetal brain</tissue>
    </source>
</reference>
<reference key="2">
    <citation type="journal article" date="2009" name="PLoS Biol.">
        <title>Lineage-specific biology revealed by a finished genome assembly of the mouse.</title>
        <authorList>
            <person name="Church D.M."/>
            <person name="Goodstadt L."/>
            <person name="Hillier L.W."/>
            <person name="Zody M.C."/>
            <person name="Goldstein S."/>
            <person name="She X."/>
            <person name="Bult C.J."/>
            <person name="Agarwala R."/>
            <person name="Cherry J.L."/>
            <person name="DiCuccio M."/>
            <person name="Hlavina W."/>
            <person name="Kapustin Y."/>
            <person name="Meric P."/>
            <person name="Maglott D."/>
            <person name="Birtle Z."/>
            <person name="Marques A.C."/>
            <person name="Graves T."/>
            <person name="Zhou S."/>
            <person name="Teague B."/>
            <person name="Potamousis K."/>
            <person name="Churas C."/>
            <person name="Place M."/>
            <person name="Herschleb J."/>
            <person name="Runnheim R."/>
            <person name="Forrest D."/>
            <person name="Amos-Landgraf J."/>
            <person name="Schwartz D.C."/>
            <person name="Cheng Z."/>
            <person name="Lindblad-Toh K."/>
            <person name="Eichler E.E."/>
            <person name="Ponting C.P."/>
        </authorList>
    </citation>
    <scope>NUCLEOTIDE SEQUENCE [LARGE SCALE GENOMIC DNA]</scope>
    <source>
        <strain>C57BL/6J</strain>
    </source>
</reference>
<reference key="3">
    <citation type="journal article" date="2004" name="Genome Res.">
        <title>The status, quality, and expansion of the NIH full-length cDNA project: the Mammalian Gene Collection (MGC).</title>
        <authorList>
            <consortium name="The MGC Project Team"/>
        </authorList>
    </citation>
    <scope>NUCLEOTIDE SEQUENCE [LARGE SCALE MRNA] (ISOFORMS 1 AND 2)</scope>
    <source>
        <strain>C57BL/6J</strain>
        <tissue>Brain</tissue>
    </source>
</reference>
<reference key="4">
    <citation type="journal article" date="2005" name="Science">
        <title>The transcriptional landscape of the mammalian genome.</title>
        <authorList>
            <person name="Carninci P."/>
            <person name="Kasukawa T."/>
            <person name="Katayama S."/>
            <person name="Gough J."/>
            <person name="Frith M.C."/>
            <person name="Maeda N."/>
            <person name="Oyama R."/>
            <person name="Ravasi T."/>
            <person name="Lenhard B."/>
            <person name="Wells C."/>
            <person name="Kodzius R."/>
            <person name="Shimokawa K."/>
            <person name="Bajic V.B."/>
            <person name="Brenner S.E."/>
            <person name="Batalov S."/>
            <person name="Forrest A.R."/>
            <person name="Zavolan M."/>
            <person name="Davis M.J."/>
            <person name="Wilming L.G."/>
            <person name="Aidinis V."/>
            <person name="Allen J.E."/>
            <person name="Ambesi-Impiombato A."/>
            <person name="Apweiler R."/>
            <person name="Aturaliya R.N."/>
            <person name="Bailey T.L."/>
            <person name="Bansal M."/>
            <person name="Baxter L."/>
            <person name="Beisel K.W."/>
            <person name="Bersano T."/>
            <person name="Bono H."/>
            <person name="Chalk A.M."/>
            <person name="Chiu K.P."/>
            <person name="Choudhary V."/>
            <person name="Christoffels A."/>
            <person name="Clutterbuck D.R."/>
            <person name="Crowe M.L."/>
            <person name="Dalla E."/>
            <person name="Dalrymple B.P."/>
            <person name="de Bono B."/>
            <person name="Della Gatta G."/>
            <person name="di Bernardo D."/>
            <person name="Down T."/>
            <person name="Engstrom P."/>
            <person name="Fagiolini M."/>
            <person name="Faulkner G."/>
            <person name="Fletcher C.F."/>
            <person name="Fukushima T."/>
            <person name="Furuno M."/>
            <person name="Futaki S."/>
            <person name="Gariboldi M."/>
            <person name="Georgii-Hemming P."/>
            <person name="Gingeras T.R."/>
            <person name="Gojobori T."/>
            <person name="Green R.E."/>
            <person name="Gustincich S."/>
            <person name="Harbers M."/>
            <person name="Hayashi Y."/>
            <person name="Hensch T.K."/>
            <person name="Hirokawa N."/>
            <person name="Hill D."/>
            <person name="Huminiecki L."/>
            <person name="Iacono M."/>
            <person name="Ikeo K."/>
            <person name="Iwama A."/>
            <person name="Ishikawa T."/>
            <person name="Jakt M."/>
            <person name="Kanapin A."/>
            <person name="Katoh M."/>
            <person name="Kawasawa Y."/>
            <person name="Kelso J."/>
            <person name="Kitamura H."/>
            <person name="Kitano H."/>
            <person name="Kollias G."/>
            <person name="Krishnan S.P."/>
            <person name="Kruger A."/>
            <person name="Kummerfeld S.K."/>
            <person name="Kurochkin I.V."/>
            <person name="Lareau L.F."/>
            <person name="Lazarevic D."/>
            <person name="Lipovich L."/>
            <person name="Liu J."/>
            <person name="Liuni S."/>
            <person name="McWilliam S."/>
            <person name="Madan Babu M."/>
            <person name="Madera M."/>
            <person name="Marchionni L."/>
            <person name="Matsuda H."/>
            <person name="Matsuzawa S."/>
            <person name="Miki H."/>
            <person name="Mignone F."/>
            <person name="Miyake S."/>
            <person name="Morris K."/>
            <person name="Mottagui-Tabar S."/>
            <person name="Mulder N."/>
            <person name="Nakano N."/>
            <person name="Nakauchi H."/>
            <person name="Ng P."/>
            <person name="Nilsson R."/>
            <person name="Nishiguchi S."/>
            <person name="Nishikawa S."/>
            <person name="Nori F."/>
            <person name="Ohara O."/>
            <person name="Okazaki Y."/>
            <person name="Orlando V."/>
            <person name="Pang K.C."/>
            <person name="Pavan W.J."/>
            <person name="Pavesi G."/>
            <person name="Pesole G."/>
            <person name="Petrovsky N."/>
            <person name="Piazza S."/>
            <person name="Reed J."/>
            <person name="Reid J.F."/>
            <person name="Ring B.Z."/>
            <person name="Ringwald M."/>
            <person name="Rost B."/>
            <person name="Ruan Y."/>
            <person name="Salzberg S.L."/>
            <person name="Sandelin A."/>
            <person name="Schneider C."/>
            <person name="Schoenbach C."/>
            <person name="Sekiguchi K."/>
            <person name="Semple C.A."/>
            <person name="Seno S."/>
            <person name="Sessa L."/>
            <person name="Sheng Y."/>
            <person name="Shibata Y."/>
            <person name="Shimada H."/>
            <person name="Shimada K."/>
            <person name="Silva D."/>
            <person name="Sinclair B."/>
            <person name="Sperling S."/>
            <person name="Stupka E."/>
            <person name="Sugiura K."/>
            <person name="Sultana R."/>
            <person name="Takenaka Y."/>
            <person name="Taki K."/>
            <person name="Tammoja K."/>
            <person name="Tan S.L."/>
            <person name="Tang S."/>
            <person name="Taylor M.S."/>
            <person name="Tegner J."/>
            <person name="Teichmann S.A."/>
            <person name="Ueda H.R."/>
            <person name="van Nimwegen E."/>
            <person name="Verardo R."/>
            <person name="Wei C.L."/>
            <person name="Yagi K."/>
            <person name="Yamanishi H."/>
            <person name="Zabarovsky E."/>
            <person name="Zhu S."/>
            <person name="Zimmer A."/>
            <person name="Hide W."/>
            <person name="Bult C."/>
            <person name="Grimmond S.M."/>
            <person name="Teasdale R.D."/>
            <person name="Liu E.T."/>
            <person name="Brusic V."/>
            <person name="Quackenbush J."/>
            <person name="Wahlestedt C."/>
            <person name="Mattick J.S."/>
            <person name="Hume D.A."/>
            <person name="Kai C."/>
            <person name="Sasaki D."/>
            <person name="Tomaru Y."/>
            <person name="Fukuda S."/>
            <person name="Kanamori-Katayama M."/>
            <person name="Suzuki M."/>
            <person name="Aoki J."/>
            <person name="Arakawa T."/>
            <person name="Iida J."/>
            <person name="Imamura K."/>
            <person name="Itoh M."/>
            <person name="Kato T."/>
            <person name="Kawaji H."/>
            <person name="Kawagashira N."/>
            <person name="Kawashima T."/>
            <person name="Kojima M."/>
            <person name="Kondo S."/>
            <person name="Konno H."/>
            <person name="Nakano K."/>
            <person name="Ninomiya N."/>
            <person name="Nishio T."/>
            <person name="Okada M."/>
            <person name="Plessy C."/>
            <person name="Shibata K."/>
            <person name="Shiraki T."/>
            <person name="Suzuki S."/>
            <person name="Tagami M."/>
            <person name="Waki K."/>
            <person name="Watahiki A."/>
            <person name="Okamura-Oho Y."/>
            <person name="Suzuki H."/>
            <person name="Kawai J."/>
            <person name="Hayashizaki Y."/>
        </authorList>
    </citation>
    <scope>NUCLEOTIDE SEQUENCE [LARGE SCALE MRNA] OF 1-149 (ISOFORM 1)</scope>
    <source>
        <strain>C57BL/6J</strain>
        <tissue>Small intestine</tissue>
    </source>
</reference>
<reference key="5">
    <citation type="journal article" date="2010" name="Cell">
        <title>A tissue-specific atlas of mouse protein phosphorylation and expression.</title>
        <authorList>
            <person name="Huttlin E.L."/>
            <person name="Jedrychowski M.P."/>
            <person name="Elias J.E."/>
            <person name="Goswami T."/>
            <person name="Rad R."/>
            <person name="Beausoleil S.A."/>
            <person name="Villen J."/>
            <person name="Haas W."/>
            <person name="Sowa M.E."/>
            <person name="Gygi S.P."/>
        </authorList>
    </citation>
    <scope>PHOSPHORYLATION [LARGE SCALE ANALYSIS] AT SER-447</scope>
    <scope>IDENTIFICATION BY MASS SPECTROMETRY [LARGE SCALE ANALYSIS]</scope>
    <source>
        <tissue>Brain</tissue>
        <tissue>Brown adipose tissue</tissue>
        <tissue>Heart</tissue>
        <tissue>Kidney</tissue>
        <tissue>Liver</tissue>
        <tissue>Lung</tissue>
        <tissue>Pancreas</tissue>
        <tissue>Testis</tissue>
    </source>
</reference>
<reference key="6">
    <citation type="journal article" date="2014" name="Proc. Natl. Acad. Sci. U.S.A.">
        <title>The hereditary spastic paraplegia-related enzyme DDHD2 is a principal brain triglyceride lipase.</title>
        <authorList>
            <person name="Inloes J.M."/>
            <person name="Hsu K.L."/>
            <person name="Dix M.M."/>
            <person name="Viader A."/>
            <person name="Masuda K."/>
            <person name="Takei T."/>
            <person name="Wood M.R."/>
            <person name="Cravatt B.F."/>
        </authorList>
    </citation>
    <scope>FUNCTION</scope>
    <scope>CATALYTIC ACTIVITY</scope>
    <scope>DISRUPTION PHENOTYPE</scope>
    <scope>MUTAGENESIS OF SER-351</scope>
</reference>
<reference key="7">
    <citation type="journal article" date="2023" name="J. Lipid Res.">
        <title>Cooperative lipolytic control of neuronal triacylglycerol by spastic paraplegia-associated enzyme DDHD2 and ATGL.</title>
        <authorList>
            <person name="Hofer P."/>
            <person name="Grabner G.F."/>
            <person name="Koenig M."/>
            <person name="Xie H."/>
            <person name="Bulfon D."/>
            <person name="Ludwig A.E."/>
            <person name="Wolinski H."/>
            <person name="Zimmermann R."/>
            <person name="Zechner R."/>
            <person name="Heier C."/>
        </authorList>
    </citation>
    <scope>FUNCTION</scope>
    <scope>CATALYTIC ACTIVITY</scope>
</reference>
<name>DDHD2_MOUSE</name>
<organism>
    <name type="scientific">Mus musculus</name>
    <name type="common">Mouse</name>
    <dbReference type="NCBI Taxonomy" id="10090"/>
    <lineage>
        <taxon>Eukaryota</taxon>
        <taxon>Metazoa</taxon>
        <taxon>Chordata</taxon>
        <taxon>Craniata</taxon>
        <taxon>Vertebrata</taxon>
        <taxon>Euteleostomi</taxon>
        <taxon>Mammalia</taxon>
        <taxon>Eutheria</taxon>
        <taxon>Euarchontoglires</taxon>
        <taxon>Glires</taxon>
        <taxon>Rodentia</taxon>
        <taxon>Myomorpha</taxon>
        <taxon>Muroidea</taxon>
        <taxon>Muridae</taxon>
        <taxon>Murinae</taxon>
        <taxon>Mus</taxon>
        <taxon>Mus</taxon>
    </lineage>
</organism>
<accession>Q80Y98</accession>
<accession>E9QKK2</accession>
<accession>Q0VF66</accession>
<accession>Q6A008</accession>
<accession>Q9CVE9</accession>
<comment type="function">
    <text evidence="1 6 7">Diacylglycerol (DAG) and triacylglycerol (TAG) lipase that is required for proper lipid homeostasis in the central nervous system (PubMed:25267624, PubMed:37832604). It cooperates with PNPLA2/ATGL in neuronal TAG catabolism and hydrolyzes sn-1,3-DAG downstream of PNPLA2/ATGL (PubMed:37832604). In vitro, also acts as a phospholipase that hydrolyzes preferentially phosphatidic acids, including 1,2-dioleoyl-sn-phosphatidic acid, phosphatidylcholine and phosphatidylethanolamine. Specifically binds to phosphatidylinositol 3-phosphate (PI(3)P), phosphatidylinositol 4-phosphate (PI(4)P), phosphatidylinositol 5-phosphate (PI(5)P) and possibly phosphatidylinositol 4,5-bisphosphate (PI(4,5)P2). May be involved in the maintenance of the endoplasmic reticulum and/or Golgi structures. May regulate the transport between Golgi apparatus and plasma membrane (By similarity).</text>
</comment>
<comment type="catalytic activity">
    <reaction evidence="6 7">
        <text>a triacylglycerol + H2O = a diacylglycerol + a fatty acid + H(+)</text>
        <dbReference type="Rhea" id="RHEA:12044"/>
        <dbReference type="ChEBI" id="CHEBI:15377"/>
        <dbReference type="ChEBI" id="CHEBI:15378"/>
        <dbReference type="ChEBI" id="CHEBI:17855"/>
        <dbReference type="ChEBI" id="CHEBI:18035"/>
        <dbReference type="ChEBI" id="CHEBI:28868"/>
        <dbReference type="EC" id="3.1.1.3"/>
    </reaction>
    <physiologicalReaction direction="left-to-right" evidence="6 7">
        <dbReference type="Rhea" id="RHEA:12045"/>
    </physiologicalReaction>
</comment>
<comment type="catalytic activity">
    <reaction evidence="6 7">
        <text>a diacylglycerol + H2O = a monoacylglycerol + a fatty acid + H(+)</text>
        <dbReference type="Rhea" id="RHEA:32731"/>
        <dbReference type="ChEBI" id="CHEBI:15377"/>
        <dbReference type="ChEBI" id="CHEBI:15378"/>
        <dbReference type="ChEBI" id="CHEBI:17408"/>
        <dbReference type="ChEBI" id="CHEBI:18035"/>
        <dbReference type="ChEBI" id="CHEBI:28868"/>
    </reaction>
    <physiologicalReaction direction="left-to-right" evidence="6 7">
        <dbReference type="Rhea" id="RHEA:32732"/>
    </physiologicalReaction>
</comment>
<comment type="catalytic activity">
    <reaction evidence="7">
        <text>a 1,3-diacylglycerol + H2O = a 1-acylglycerol + a fatty acid + H(+)</text>
        <dbReference type="Rhea" id="RHEA:78019"/>
        <dbReference type="ChEBI" id="CHEBI:15377"/>
        <dbReference type="ChEBI" id="CHEBI:15378"/>
        <dbReference type="ChEBI" id="CHEBI:28868"/>
        <dbReference type="ChEBI" id="CHEBI:35759"/>
        <dbReference type="ChEBI" id="CHEBI:47777"/>
    </reaction>
    <physiologicalReaction direction="left-to-right" evidence="7">
        <dbReference type="Rhea" id="RHEA:78020"/>
    </physiologicalReaction>
</comment>
<comment type="catalytic activity">
    <reaction evidence="7">
        <text>a 1-acylglycerol + H2O = glycerol + a fatty acid + H(+)</text>
        <dbReference type="Rhea" id="RHEA:34019"/>
        <dbReference type="ChEBI" id="CHEBI:15377"/>
        <dbReference type="ChEBI" id="CHEBI:15378"/>
        <dbReference type="ChEBI" id="CHEBI:17754"/>
        <dbReference type="ChEBI" id="CHEBI:28868"/>
        <dbReference type="ChEBI" id="CHEBI:35759"/>
    </reaction>
    <physiologicalReaction direction="left-to-right" evidence="7">
        <dbReference type="Rhea" id="RHEA:34020"/>
    </physiologicalReaction>
</comment>
<comment type="catalytic activity">
    <reaction evidence="6 7">
        <text>1,2,3-tri-(9Z-octadecenoyl)-glycerol + H2O = di-(9Z)-octadecenoylglycerol + (9Z)-octadecenoate + H(+)</text>
        <dbReference type="Rhea" id="RHEA:38575"/>
        <dbReference type="ChEBI" id="CHEBI:15377"/>
        <dbReference type="ChEBI" id="CHEBI:15378"/>
        <dbReference type="ChEBI" id="CHEBI:30823"/>
        <dbReference type="ChEBI" id="CHEBI:53753"/>
        <dbReference type="ChEBI" id="CHEBI:75945"/>
    </reaction>
    <physiologicalReaction direction="left-to-right" evidence="6 7">
        <dbReference type="Rhea" id="RHEA:38576"/>
    </physiologicalReaction>
</comment>
<comment type="catalytic activity">
    <reaction evidence="6 7">
        <text>di-(9Z)-octadecenoylglycerol + H2O = (9Z-octadecenoyl)-glycerol + (9Z)-octadecenoate + H(+)</text>
        <dbReference type="Rhea" id="RHEA:47868"/>
        <dbReference type="ChEBI" id="CHEBI:15377"/>
        <dbReference type="ChEBI" id="CHEBI:15378"/>
        <dbReference type="ChEBI" id="CHEBI:30823"/>
        <dbReference type="ChEBI" id="CHEBI:75937"/>
        <dbReference type="ChEBI" id="CHEBI:75945"/>
    </reaction>
    <physiologicalReaction direction="left-to-right" evidence="6 7">
        <dbReference type="Rhea" id="RHEA:47869"/>
    </physiologicalReaction>
</comment>
<comment type="catalytic activity">
    <reaction evidence="7">
        <text>1,3-di-(9Z-octadecenoyl)-glycerol + H2O = 1-(9Z-octadecenoyl)-glycerol + (9Z)-octadecenoate + H(+)</text>
        <dbReference type="Rhea" id="RHEA:39939"/>
        <dbReference type="ChEBI" id="CHEBI:15377"/>
        <dbReference type="ChEBI" id="CHEBI:15378"/>
        <dbReference type="ChEBI" id="CHEBI:30823"/>
        <dbReference type="ChEBI" id="CHEBI:75342"/>
        <dbReference type="ChEBI" id="CHEBI:75735"/>
    </reaction>
</comment>
<comment type="catalytic activity">
    <reaction evidence="13">
        <text>trihexadecanoylglycerol + H2O = dihexadecanoylglycerol + hexadecanoate + H(+)</text>
        <dbReference type="Rhea" id="RHEA:59024"/>
        <dbReference type="ChEBI" id="CHEBI:7896"/>
        <dbReference type="ChEBI" id="CHEBI:15377"/>
        <dbReference type="ChEBI" id="CHEBI:15378"/>
        <dbReference type="ChEBI" id="CHEBI:77393"/>
        <dbReference type="ChEBI" id="CHEBI:142940"/>
    </reaction>
    <physiologicalReaction direction="left-to-right" evidence="13">
        <dbReference type="Rhea" id="RHEA:59025"/>
    </physiologicalReaction>
</comment>
<comment type="catalytic activity">
    <reaction evidence="7">
        <text>1,2-di-(9Z-octadecenoyl)-sn-glycero-3-phosphocholine + H2O = (9Z-octadecenoyl)-sn-glycero-3-phosphocholine + (9Z)-octadecenoate + H(+)</text>
        <dbReference type="Rhea" id="RHEA:38699"/>
        <dbReference type="ChEBI" id="CHEBI:15377"/>
        <dbReference type="ChEBI" id="CHEBI:15378"/>
        <dbReference type="ChEBI" id="CHEBI:30823"/>
        <dbReference type="ChEBI" id="CHEBI:74669"/>
        <dbReference type="ChEBI" id="CHEBI:76083"/>
    </reaction>
    <physiologicalReaction direction="left-to-right" evidence="7">
        <dbReference type="Rhea" id="RHEA:38700"/>
    </physiologicalReaction>
</comment>
<comment type="catalytic activity">
    <reaction evidence="7">
        <text>1-(9Z-octadecenoyl)-glycerol + H2O = glycerol + (9Z)-octadecenoate + H(+)</text>
        <dbReference type="Rhea" id="RHEA:38487"/>
        <dbReference type="ChEBI" id="CHEBI:15377"/>
        <dbReference type="ChEBI" id="CHEBI:15378"/>
        <dbReference type="ChEBI" id="CHEBI:17754"/>
        <dbReference type="ChEBI" id="CHEBI:30823"/>
        <dbReference type="ChEBI" id="CHEBI:75342"/>
    </reaction>
    <physiologicalReaction direction="left-to-right" evidence="7">
        <dbReference type="Rhea" id="RHEA:38488"/>
    </physiologicalReaction>
</comment>
<comment type="catalytic activity">
    <reaction evidence="2">
        <text>1,2-di-(9Z-octadecenoyl)-sn-glycero-3-phosphate + H2O = 2-(9Z-octadecenoyl)-sn-glycero-3-phosphate + (9Z)-octadecenoate + H(+)</text>
        <dbReference type="Rhea" id="RHEA:45128"/>
        <dbReference type="ChEBI" id="CHEBI:15377"/>
        <dbReference type="ChEBI" id="CHEBI:15378"/>
        <dbReference type="ChEBI" id="CHEBI:30823"/>
        <dbReference type="ChEBI" id="CHEBI:74546"/>
        <dbReference type="ChEBI" id="CHEBI:77593"/>
    </reaction>
    <physiologicalReaction direction="left-to-right" evidence="2">
        <dbReference type="Rhea" id="RHEA:45129"/>
    </physiologicalReaction>
</comment>
<comment type="catalytic activity">
    <reaction evidence="2">
        <text>1-hexadecanoyl-2-(9Z-octadecenoyl)-sn-glycero-3-phosphate + H2O = 2-(9Z-octadecenoyl)-sn-glycero-3-phosphate + hexadecanoate + H(+)</text>
        <dbReference type="Rhea" id="RHEA:40943"/>
        <dbReference type="ChEBI" id="CHEBI:7896"/>
        <dbReference type="ChEBI" id="CHEBI:15377"/>
        <dbReference type="ChEBI" id="CHEBI:15378"/>
        <dbReference type="ChEBI" id="CHEBI:64839"/>
        <dbReference type="ChEBI" id="CHEBI:77593"/>
    </reaction>
    <physiologicalReaction direction="left-to-right" evidence="2">
        <dbReference type="Rhea" id="RHEA:40944"/>
    </physiologicalReaction>
</comment>
<comment type="catalytic activity">
    <reaction evidence="2">
        <text>1-hexadecanoyl-2-(9Z-octadecenoyl)-sn-glycero-3-phosphoethanolamine + H2O = 2-(9Z-octadecenoyl)-sn-glycero-3-phosphoethanolamine + hexadecanoate + H(+)</text>
        <dbReference type="Rhea" id="RHEA:45132"/>
        <dbReference type="ChEBI" id="CHEBI:7896"/>
        <dbReference type="ChEBI" id="CHEBI:15377"/>
        <dbReference type="ChEBI" id="CHEBI:15378"/>
        <dbReference type="ChEBI" id="CHEBI:73007"/>
        <dbReference type="ChEBI" id="CHEBI:76088"/>
    </reaction>
    <physiologicalReaction direction="left-to-right" evidence="2">
        <dbReference type="Rhea" id="RHEA:45133"/>
    </physiologicalReaction>
</comment>
<comment type="catalytic activity">
    <reaction evidence="2">
        <text>1-hexadecanoyl-2-(9Z-octadecenoyl)-sn-glycero-3-phospho-L-serine + H2O = 2-(9Z-octadecenoyl)-sn-glycero-3-phospho-L-serine + hexadecanoate + H(+)</text>
        <dbReference type="Rhea" id="RHEA:43968"/>
        <dbReference type="ChEBI" id="CHEBI:7896"/>
        <dbReference type="ChEBI" id="CHEBI:15377"/>
        <dbReference type="ChEBI" id="CHEBI:15378"/>
        <dbReference type="ChEBI" id="CHEBI:75029"/>
        <dbReference type="ChEBI" id="CHEBI:77342"/>
    </reaction>
    <physiologicalReaction direction="left-to-right" evidence="2">
        <dbReference type="Rhea" id="RHEA:43969"/>
    </physiologicalReaction>
</comment>
<comment type="catalytic activity">
    <reaction evidence="2">
        <text>1-hexadecanoyl-2-(9Z-octadecenoyl)-sn-glycero-3-phosphocholine + H2O = 2-(9Z-octadecenoyl)-sn-glycero-3-phosphocholine + hexadecanoate + H(+)</text>
        <dbReference type="Rhea" id="RHEA:38783"/>
        <dbReference type="ChEBI" id="CHEBI:7896"/>
        <dbReference type="ChEBI" id="CHEBI:15377"/>
        <dbReference type="ChEBI" id="CHEBI:15378"/>
        <dbReference type="ChEBI" id="CHEBI:73001"/>
        <dbReference type="ChEBI" id="CHEBI:76071"/>
    </reaction>
    <physiologicalReaction direction="left-to-right" evidence="2">
        <dbReference type="Rhea" id="RHEA:38784"/>
    </physiologicalReaction>
</comment>
<comment type="subunit">
    <text evidence="1">Forms homooligomers and, to a much smaller extent, heterooligomers with DDHD1.</text>
</comment>
<comment type="subcellular location">
    <subcellularLocation>
        <location evidence="1">Cytoplasm</location>
        <location evidence="1">Cytosol</location>
    </subcellularLocation>
    <subcellularLocation>
        <location evidence="1">Endoplasmic reticulum-Golgi intermediate compartment</location>
    </subcellularLocation>
    <subcellularLocation>
        <location evidence="1">Golgi apparatus</location>
        <location evidence="1">cis-Golgi network</location>
    </subcellularLocation>
    <text evidence="1">Cycles between the Golgi apparatus and the cytosol. DDHD2 recruitment to the Golgi/endoplasmic reticulum-Golgi intermediate compartment (ERGIC) is regulated by the levels of phosphoinositides, including PI(4)P (By similarity).</text>
</comment>
<comment type="alternative products">
    <event type="alternative splicing"/>
    <isoform>
        <id>Q80Y98-1</id>
        <name>1</name>
        <sequence type="displayed"/>
    </isoform>
    <isoform>
        <id>Q80Y98-2</id>
        <name>2</name>
        <sequence type="described" ref="VSP_029141 VSP_029143"/>
    </isoform>
    <isoform>
        <id>Q80Y98-3</id>
        <name>3</name>
        <sequence type="described" ref="VSP_029142 VSP_029144"/>
    </isoform>
</comment>
<comment type="domain">
    <text evidence="1">SAM and DDHD domains together are required for phospholipid binding.</text>
</comment>
<comment type="disruption phenotype">
    <text evidence="6">Knockout mice display memory and cognitive impairments, and locomotor defects such as significantly shorter stride lengths in gait measurement assays, reductions in rearing behavior, and reduced balance compared to wild-type animals. Mutant mice also show age-dependent increased levels of triacylglycerols in the central nervous system, and accumulation of large lipid droplets in brain neurons. Bulk brain levels of phospholipids are unchanged.</text>
</comment>
<comment type="similarity">
    <text evidence="12">Belongs to the PA-PLA1 family.</text>
</comment>
<comment type="caution">
    <text evidence="12">It is uncertain whether Met-1 or Met-31 is the initiator.</text>
</comment>
<comment type="sequence caution" evidence="12">
    <conflict type="erroneous initiation">
        <sequence resource="EMBL-CDS" id="AAH46229"/>
    </conflict>
    <text>Extended N-terminus.</text>
</comment>
<comment type="sequence caution" evidence="12">
    <conflict type="frameshift">
        <sequence resource="EMBL-CDS" id="AAI18963"/>
    </conflict>
</comment>
<comment type="sequence caution" evidence="12">
    <conflict type="erroneous initiation">
        <sequence resource="EMBL-CDS" id="BAD32288"/>
    </conflict>
    <text>Extended N-terminus.</text>
</comment>
<evidence type="ECO:0000250" key="1"/>
<evidence type="ECO:0000250" key="2">
    <source>
        <dbReference type="UniProtKB" id="O94830"/>
    </source>
</evidence>
<evidence type="ECO:0000255" key="3">
    <source>
        <dbReference type="PROSITE-ProRule" id="PRU00248"/>
    </source>
</evidence>
<evidence type="ECO:0000255" key="4">
    <source>
        <dbReference type="PROSITE-ProRule" id="PRU00378"/>
    </source>
</evidence>
<evidence type="ECO:0000256" key="5">
    <source>
        <dbReference type="SAM" id="MobiDB-lite"/>
    </source>
</evidence>
<evidence type="ECO:0000269" key="6">
    <source>
    </source>
</evidence>
<evidence type="ECO:0000269" key="7">
    <source>
    </source>
</evidence>
<evidence type="ECO:0000303" key="8">
    <source>
    </source>
</evidence>
<evidence type="ECO:0000303" key="9">
    <source>
    </source>
</evidence>
<evidence type="ECO:0000303" key="10">
    <source>
    </source>
</evidence>
<evidence type="ECO:0000303" key="11">
    <source>
    </source>
</evidence>
<evidence type="ECO:0000305" key="12"/>
<evidence type="ECO:0000305" key="13">
    <source>
    </source>
</evidence>
<evidence type="ECO:0000312" key="14">
    <source>
        <dbReference type="MGI" id="MGI:1919358"/>
    </source>
</evidence>
<evidence type="ECO:0007744" key="15">
    <source>
    </source>
</evidence>
<protein>
    <recommendedName>
        <fullName evidence="10 11">Triacylglycerol hydrolase DDHD2</fullName>
        <shortName evidence="10 11">TAG hydrolase</shortName>
        <ecNumber evidence="6 7">3.1.1.3</ecNumber>
    </recommendedName>
    <alternativeName>
        <fullName evidence="12">DDHD domain-containing protein 2</fullName>
    </alternativeName>
    <alternativeName>
        <fullName evidence="12">Phospholipase DDHD2</fullName>
        <ecNumber>3.1.1.-</ecNumber>
    </alternativeName>
    <alternativeName>
        <fullName>SAM, WWE and DDHD domain-containing protein 1</fullName>
    </alternativeName>
    <alternativeName>
        <fullName evidence="13">Triglyceride hydrolase DDHD2</fullName>
    </alternativeName>
    <alternativeName>
        <fullName evidence="10">Triglyceride lipase</fullName>
    </alternativeName>
</protein>
<feature type="chain" id="PRO_0000309331" description="Triacylglycerol hydrolase DDHD2">
    <location>
        <begin position="1"/>
        <end position="699"/>
    </location>
</feature>
<feature type="domain" description="WWE" evidence="3">
    <location>
        <begin position="30"/>
        <end position="112"/>
    </location>
</feature>
<feature type="domain" description="SAM">
    <location>
        <begin position="383"/>
        <end position="445"/>
    </location>
</feature>
<feature type="domain" description="DDHD" evidence="4">
    <location>
        <begin position="484"/>
        <end position="688"/>
    </location>
</feature>
<feature type="region of interest" description="Disordered" evidence="5">
    <location>
        <begin position="1"/>
        <end position="25"/>
    </location>
</feature>
<feature type="region of interest" description="Disordered" evidence="5">
    <location>
        <begin position="599"/>
        <end position="635"/>
    </location>
</feature>
<feature type="compositionally biased region" description="Polar residues" evidence="5">
    <location>
        <begin position="1"/>
        <end position="11"/>
    </location>
</feature>
<feature type="compositionally biased region" description="Low complexity" evidence="5">
    <location>
        <begin position="12"/>
        <end position="25"/>
    </location>
</feature>
<feature type="compositionally biased region" description="Acidic residues" evidence="5">
    <location>
        <begin position="603"/>
        <end position="613"/>
    </location>
</feature>
<feature type="active site" description="Nucleophile" evidence="13">
    <location>
        <position position="351"/>
    </location>
</feature>
<feature type="modified residue" description="Phosphoserine" evidence="15">
    <location>
        <position position="447"/>
    </location>
</feature>
<feature type="splice variant" id="VSP_029141" description="In isoform 2." evidence="9">
    <original>M</original>
    <variation>MRGQKVRFSSFKASAQARPPVRVPHAPSACPARARRPTSARRRSQVSRESPSPHRTSRDTSEDLSAPPALTGSAASAGALLSTAGALRSPRCGDWGAAAGSARPPRPAWESEM</variation>
    <location>
        <position position="1"/>
    </location>
</feature>
<feature type="splice variant" id="VSP_029142" description="In isoform 3." evidence="8">
    <original>IDLQRITLPSINRLRHFTNDTILDVFFYNSPTYCQTIVDTVASEMNRIYTLFLQRNPDFKGGVSIAGHSLGSLILFDILTNQKNSIGDIDSEKGSLSSAE</original>
    <variation>M</variation>
    <location>
        <begin position="283"/>
        <end position="382"/>
    </location>
</feature>
<feature type="splice variant" id="VSP_029143" description="In isoform 2." evidence="9">
    <location>
        <begin position="448"/>
        <end position="528"/>
    </location>
</feature>
<feature type="splice variant" id="VSP_029144" description="In isoform 3." evidence="8">
    <location>
        <begin position="529"/>
        <end position="562"/>
    </location>
</feature>
<feature type="mutagenesis site" description="Loss of TAG hydrolase activity." evidence="6">
    <original>S</original>
    <variation>A</variation>
    <location>
        <position position="351"/>
    </location>
</feature>
<feature type="sequence conflict" description="In Ref. 1; BAD32288 and 3; AAI18963." evidence="12" ref="1 3">
    <original>S</original>
    <variation>N</variation>
    <location>
        <position position="637"/>
    </location>
</feature>
<keyword id="KW-0025">Alternative splicing</keyword>
<keyword id="KW-0963">Cytoplasm</keyword>
<keyword id="KW-0333">Golgi apparatus</keyword>
<keyword id="KW-0378">Hydrolase</keyword>
<keyword id="KW-0442">Lipid degradation</keyword>
<keyword id="KW-0443">Lipid metabolism</keyword>
<keyword id="KW-0597">Phosphoprotein</keyword>
<keyword id="KW-1185">Reference proteome</keyword>
<proteinExistence type="evidence at protein level"/>
<dbReference type="EC" id="3.1.1.3" evidence="6 7"/>
<dbReference type="EC" id="3.1.1.-"/>
<dbReference type="EMBL" id="AK173010">
    <property type="protein sequence ID" value="BAD32288.1"/>
    <property type="status" value="ALT_INIT"/>
    <property type="molecule type" value="Transcribed_RNA"/>
</dbReference>
<dbReference type="EMBL" id="AC156990">
    <property type="status" value="NOT_ANNOTATED_CDS"/>
    <property type="molecule type" value="Genomic_DNA"/>
</dbReference>
<dbReference type="EMBL" id="BC046229">
    <property type="protein sequence ID" value="AAH46229.1"/>
    <property type="status" value="ALT_INIT"/>
    <property type="molecule type" value="mRNA"/>
</dbReference>
<dbReference type="EMBL" id="BC118962">
    <property type="protein sequence ID" value="AAI18963.1"/>
    <property type="status" value="ALT_FRAME"/>
    <property type="molecule type" value="mRNA"/>
</dbReference>
<dbReference type="EMBL" id="AK008529">
    <property type="protein sequence ID" value="BAB25722.1"/>
    <property type="molecule type" value="mRNA"/>
</dbReference>
<dbReference type="CCDS" id="CCDS52529.1">
    <molecule id="Q80Y98-1"/>
</dbReference>
<dbReference type="RefSeq" id="NP_082378.1">
    <molecule id="Q80Y98-1"/>
    <property type="nucleotide sequence ID" value="NM_028102.2"/>
</dbReference>
<dbReference type="RefSeq" id="XP_006509260.2">
    <molecule id="Q80Y98-1"/>
    <property type="nucleotide sequence ID" value="XM_006509197.5"/>
</dbReference>
<dbReference type="RefSeq" id="XP_006509261.1">
    <molecule id="Q80Y98-1"/>
    <property type="nucleotide sequence ID" value="XM_006509198.5"/>
</dbReference>
<dbReference type="SMR" id="Q80Y98"/>
<dbReference type="BioGRID" id="215157">
    <property type="interactions" value="1"/>
</dbReference>
<dbReference type="FunCoup" id="Q80Y98">
    <property type="interactions" value="2123"/>
</dbReference>
<dbReference type="STRING" id="10090.ENSMUSP00000033975"/>
<dbReference type="ChEMBL" id="CHEMBL3259495"/>
<dbReference type="GlyGen" id="Q80Y98">
    <property type="glycosylation" value="1 site, 1 O-linked glycan (1 site)"/>
</dbReference>
<dbReference type="iPTMnet" id="Q80Y98"/>
<dbReference type="PhosphoSitePlus" id="Q80Y98"/>
<dbReference type="jPOST" id="Q80Y98"/>
<dbReference type="PaxDb" id="10090-ENSMUSP00000033975"/>
<dbReference type="PeptideAtlas" id="Q80Y98"/>
<dbReference type="ProteomicsDB" id="279509">
    <molecule id="Q80Y98-1"/>
</dbReference>
<dbReference type="ProteomicsDB" id="279510">
    <molecule id="Q80Y98-2"/>
</dbReference>
<dbReference type="ProteomicsDB" id="279511">
    <molecule id="Q80Y98-3"/>
</dbReference>
<dbReference type="Pumba" id="Q80Y98"/>
<dbReference type="Antibodypedia" id="4449">
    <property type="antibodies" value="72 antibodies from 18 providers"/>
</dbReference>
<dbReference type="Ensembl" id="ENSMUST00000033975.9">
    <molecule id="Q80Y98-1"/>
    <property type="protein sequence ID" value="ENSMUSP00000033975.7"/>
    <property type="gene ID" value="ENSMUSG00000061313.11"/>
</dbReference>
<dbReference type="GeneID" id="72108"/>
<dbReference type="KEGG" id="mmu:72108"/>
<dbReference type="UCSC" id="uc009lgv.2">
    <molecule id="Q80Y98-1"/>
    <property type="organism name" value="mouse"/>
</dbReference>
<dbReference type="UCSC" id="uc009lgw.2">
    <molecule id="Q80Y98-2"/>
    <property type="organism name" value="mouse"/>
</dbReference>
<dbReference type="AGR" id="MGI:1919358"/>
<dbReference type="CTD" id="23259"/>
<dbReference type="MGI" id="MGI:1919358">
    <property type="gene designation" value="Ddhd2"/>
</dbReference>
<dbReference type="VEuPathDB" id="HostDB:ENSMUSG00000061313"/>
<dbReference type="eggNOG" id="KOG2308">
    <property type="taxonomic scope" value="Eukaryota"/>
</dbReference>
<dbReference type="GeneTree" id="ENSGT00940000156808"/>
<dbReference type="HOGENOM" id="CLU_006932_0_0_1"/>
<dbReference type="InParanoid" id="Q80Y98"/>
<dbReference type="OMA" id="MPTCAET"/>
<dbReference type="OrthoDB" id="69269at2759"/>
<dbReference type="PhylomeDB" id="Q80Y98"/>
<dbReference type="TreeFam" id="TF314133"/>
<dbReference type="Reactome" id="R-MMU-1483166">
    <property type="pathway name" value="Synthesis of PA"/>
</dbReference>
<dbReference type="BioGRID-ORCS" id="72108">
    <property type="hits" value="0 hits in 79 CRISPR screens"/>
</dbReference>
<dbReference type="ChiTaRS" id="Ddhd2">
    <property type="organism name" value="mouse"/>
</dbReference>
<dbReference type="PRO" id="PR:Q80Y98"/>
<dbReference type="Proteomes" id="UP000000589">
    <property type="component" value="Chromosome 8"/>
</dbReference>
<dbReference type="RNAct" id="Q80Y98">
    <property type="molecule type" value="protein"/>
</dbReference>
<dbReference type="Bgee" id="ENSMUSG00000061313">
    <property type="expression patterns" value="Expressed in brown adipose tissue and 266 other cell types or tissues"/>
</dbReference>
<dbReference type="ExpressionAtlas" id="Q80Y98">
    <property type="expression patterns" value="baseline and differential"/>
</dbReference>
<dbReference type="GO" id="GO:0034451">
    <property type="term" value="C:centriolar satellite"/>
    <property type="evidence" value="ECO:0007669"/>
    <property type="project" value="Ensembl"/>
</dbReference>
<dbReference type="GO" id="GO:0005829">
    <property type="term" value="C:cytosol"/>
    <property type="evidence" value="ECO:0007669"/>
    <property type="project" value="UniProtKB-SubCell"/>
</dbReference>
<dbReference type="GO" id="GO:0005793">
    <property type="term" value="C:endoplasmic reticulum-Golgi intermediate compartment"/>
    <property type="evidence" value="ECO:0007669"/>
    <property type="project" value="UniProtKB-SubCell"/>
</dbReference>
<dbReference type="GO" id="GO:0005794">
    <property type="term" value="C:Golgi apparatus"/>
    <property type="evidence" value="ECO:0007669"/>
    <property type="project" value="UniProtKB-SubCell"/>
</dbReference>
<dbReference type="GO" id="GO:0016020">
    <property type="term" value="C:membrane"/>
    <property type="evidence" value="ECO:0000314"/>
    <property type="project" value="MGI"/>
</dbReference>
<dbReference type="GO" id="GO:0120516">
    <property type="term" value="F:diacylglycerol lipase activity"/>
    <property type="evidence" value="ECO:0007669"/>
    <property type="project" value="RHEA"/>
</dbReference>
<dbReference type="GO" id="GO:0046872">
    <property type="term" value="F:metal ion binding"/>
    <property type="evidence" value="ECO:0007669"/>
    <property type="project" value="InterPro"/>
</dbReference>
<dbReference type="GO" id="GO:0004806">
    <property type="term" value="F:triacylglycerol lipase activity"/>
    <property type="evidence" value="ECO:0000314"/>
    <property type="project" value="MGI"/>
</dbReference>
<dbReference type="GO" id="GO:0034389">
    <property type="term" value="P:lipid droplet organization"/>
    <property type="evidence" value="ECO:0000315"/>
    <property type="project" value="MGI"/>
</dbReference>
<dbReference type="GO" id="GO:0007626">
    <property type="term" value="P:locomotory behavior"/>
    <property type="evidence" value="ECO:0000315"/>
    <property type="project" value="MGI"/>
</dbReference>
<dbReference type="GO" id="GO:0000266">
    <property type="term" value="P:mitochondrial fission"/>
    <property type="evidence" value="ECO:0000315"/>
    <property type="project" value="MGI"/>
</dbReference>
<dbReference type="GO" id="GO:0090141">
    <property type="term" value="P:positive regulation of mitochondrial fission"/>
    <property type="evidence" value="ECO:0000315"/>
    <property type="project" value="MGI"/>
</dbReference>
<dbReference type="GO" id="GO:0019433">
    <property type="term" value="P:triglyceride catabolic process"/>
    <property type="evidence" value="ECO:0000315"/>
    <property type="project" value="MGI"/>
</dbReference>
<dbReference type="GO" id="GO:0008542">
    <property type="term" value="P:visual learning"/>
    <property type="evidence" value="ECO:0000315"/>
    <property type="project" value="MGI"/>
</dbReference>
<dbReference type="FunFam" id="1.10.150.50:FF:000034">
    <property type="entry name" value="ankyrin repeat and SAM domain-containing protein 4B"/>
    <property type="match status" value="1"/>
</dbReference>
<dbReference type="Gene3D" id="1.10.150.50">
    <property type="entry name" value="Transcription Factor, Ets-1"/>
    <property type="match status" value="1"/>
</dbReference>
<dbReference type="InterPro" id="IPR004177">
    <property type="entry name" value="DDHD_dom"/>
</dbReference>
<dbReference type="InterPro" id="IPR001660">
    <property type="entry name" value="SAM"/>
</dbReference>
<dbReference type="InterPro" id="IPR013761">
    <property type="entry name" value="SAM/pointed_sf"/>
</dbReference>
<dbReference type="InterPro" id="IPR004170">
    <property type="entry name" value="WWE_dom"/>
</dbReference>
<dbReference type="PANTHER" id="PTHR23509">
    <property type="entry name" value="PA-PL1 PHOSPHOLIPASE FAMILY"/>
    <property type="match status" value="1"/>
</dbReference>
<dbReference type="PANTHER" id="PTHR23509:SF7">
    <property type="entry name" value="PHOSPHOLIPASE DDHD2"/>
    <property type="match status" value="1"/>
</dbReference>
<dbReference type="Pfam" id="PF02862">
    <property type="entry name" value="DDHD"/>
    <property type="match status" value="1"/>
</dbReference>
<dbReference type="Pfam" id="PF00536">
    <property type="entry name" value="SAM_1"/>
    <property type="match status" value="1"/>
</dbReference>
<dbReference type="Pfam" id="PF02825">
    <property type="entry name" value="WWE"/>
    <property type="match status" value="1"/>
</dbReference>
<dbReference type="Pfam" id="PF23464">
    <property type="entry name" value="WWE_3"/>
    <property type="match status" value="1"/>
</dbReference>
<dbReference type="SMART" id="SM01127">
    <property type="entry name" value="DDHD"/>
    <property type="match status" value="1"/>
</dbReference>
<dbReference type="SMART" id="SM00454">
    <property type="entry name" value="SAM"/>
    <property type="match status" value="1"/>
</dbReference>
<dbReference type="SUPFAM" id="SSF47769">
    <property type="entry name" value="SAM/Pointed domain"/>
    <property type="match status" value="1"/>
</dbReference>
<dbReference type="PROSITE" id="PS51043">
    <property type="entry name" value="DDHD"/>
    <property type="match status" value="1"/>
</dbReference>
<dbReference type="PROSITE" id="PS50918">
    <property type="entry name" value="WWE"/>
    <property type="match status" value="1"/>
</dbReference>